<organism>
    <name type="scientific">Xanthomonas oryzae pv. oryzae (strain KACC10331 / KXO85)</name>
    <dbReference type="NCBI Taxonomy" id="291331"/>
    <lineage>
        <taxon>Bacteria</taxon>
        <taxon>Pseudomonadati</taxon>
        <taxon>Pseudomonadota</taxon>
        <taxon>Gammaproteobacteria</taxon>
        <taxon>Lysobacterales</taxon>
        <taxon>Lysobacteraceae</taxon>
        <taxon>Xanthomonas</taxon>
    </lineage>
</organism>
<proteinExistence type="inferred from homology"/>
<reference key="1">
    <citation type="journal article" date="2005" name="Nucleic Acids Res.">
        <title>The genome sequence of Xanthomonas oryzae pathovar oryzae KACC10331, the bacterial blight pathogen of rice.</title>
        <authorList>
            <person name="Lee B.-M."/>
            <person name="Park Y.-J."/>
            <person name="Park D.-S."/>
            <person name="Kang H.-W."/>
            <person name="Kim J.-G."/>
            <person name="Song E.-S."/>
            <person name="Park I.-C."/>
            <person name="Yoon U.-H."/>
            <person name="Hahn J.-H."/>
            <person name="Koo B.-S."/>
            <person name="Lee G.-B."/>
            <person name="Kim H."/>
            <person name="Park H.-S."/>
            <person name="Yoon K.-O."/>
            <person name="Kim J.-H."/>
            <person name="Jung C.-H."/>
            <person name="Koh N.-H."/>
            <person name="Seo J.-S."/>
            <person name="Go S.-J."/>
        </authorList>
    </citation>
    <scope>NUCLEOTIDE SEQUENCE [LARGE SCALE GENOMIC DNA]</scope>
    <source>
        <strain>KACC10331 / KXO85</strain>
    </source>
</reference>
<comment type="function">
    <text evidence="2">Catalyzes the formation of N(7)-methylguanine at position 46 (m7G46) in tRNA.</text>
</comment>
<comment type="catalytic activity">
    <reaction evidence="2">
        <text>guanosine(46) in tRNA + S-adenosyl-L-methionine = N(7)-methylguanosine(46) in tRNA + S-adenosyl-L-homocysteine</text>
        <dbReference type="Rhea" id="RHEA:42708"/>
        <dbReference type="Rhea" id="RHEA-COMP:10188"/>
        <dbReference type="Rhea" id="RHEA-COMP:10189"/>
        <dbReference type="ChEBI" id="CHEBI:57856"/>
        <dbReference type="ChEBI" id="CHEBI:59789"/>
        <dbReference type="ChEBI" id="CHEBI:74269"/>
        <dbReference type="ChEBI" id="CHEBI:74480"/>
        <dbReference type="EC" id="2.1.1.33"/>
    </reaction>
</comment>
<comment type="pathway">
    <text evidence="2">tRNA modification; N(7)-methylguanine-tRNA biosynthesis.</text>
</comment>
<comment type="similarity">
    <text evidence="2">Belongs to the class I-like SAM-binding methyltransferase superfamily. TrmB family.</text>
</comment>
<keyword id="KW-0489">Methyltransferase</keyword>
<keyword id="KW-1185">Reference proteome</keyword>
<keyword id="KW-0949">S-adenosyl-L-methionine</keyword>
<keyword id="KW-0808">Transferase</keyword>
<keyword id="KW-0819">tRNA processing</keyword>
<feature type="chain" id="PRO_0000229211" description="tRNA (guanine-N(7)-)-methyltransferase">
    <location>
        <begin position="1"/>
        <end position="252"/>
    </location>
</feature>
<feature type="region of interest" description="Interaction with RNA" evidence="2">
    <location>
        <begin position="156"/>
        <end position="161"/>
    </location>
</feature>
<feature type="active site" evidence="1">
    <location>
        <position position="150"/>
    </location>
</feature>
<feature type="binding site" evidence="2">
    <location>
        <position position="75"/>
    </location>
    <ligand>
        <name>S-adenosyl-L-methionine</name>
        <dbReference type="ChEBI" id="CHEBI:59789"/>
    </ligand>
</feature>
<feature type="binding site" evidence="2">
    <location>
        <position position="100"/>
    </location>
    <ligand>
        <name>S-adenosyl-L-methionine</name>
        <dbReference type="ChEBI" id="CHEBI:59789"/>
    </ligand>
</feature>
<feature type="binding site" evidence="2">
    <location>
        <position position="127"/>
    </location>
    <ligand>
        <name>S-adenosyl-L-methionine</name>
        <dbReference type="ChEBI" id="CHEBI:59789"/>
    </ligand>
</feature>
<feature type="binding site" evidence="2">
    <location>
        <position position="150"/>
    </location>
    <ligand>
        <name>S-adenosyl-L-methionine</name>
        <dbReference type="ChEBI" id="CHEBI:59789"/>
    </ligand>
</feature>
<feature type="binding site" evidence="2">
    <location>
        <position position="154"/>
    </location>
    <ligand>
        <name>substrate</name>
    </ligand>
</feature>
<feature type="binding site" evidence="2">
    <location>
        <position position="186"/>
    </location>
    <ligand>
        <name>substrate</name>
    </ligand>
</feature>
<feature type="binding site" evidence="2">
    <location>
        <begin position="223"/>
        <end position="226"/>
    </location>
    <ligand>
        <name>substrate</name>
    </ligand>
</feature>
<name>TRMB_XANOR</name>
<protein>
    <recommendedName>
        <fullName evidence="2">tRNA (guanine-N(7)-)-methyltransferase</fullName>
        <ecNumber evidence="2">2.1.1.33</ecNumber>
    </recommendedName>
    <alternativeName>
        <fullName evidence="2">tRNA (guanine(46)-N(7))-methyltransferase</fullName>
    </alternativeName>
    <alternativeName>
        <fullName evidence="2">tRNA(m7G46)-methyltransferase</fullName>
    </alternativeName>
</protein>
<evidence type="ECO:0000250" key="1"/>
<evidence type="ECO:0000255" key="2">
    <source>
        <dbReference type="HAMAP-Rule" id="MF_01057"/>
    </source>
</evidence>
<dbReference type="EC" id="2.1.1.33" evidence="2"/>
<dbReference type="EMBL" id="AE013598">
    <property type="protein sequence ID" value="AAW76627.1"/>
    <property type="molecule type" value="Genomic_DNA"/>
</dbReference>
<dbReference type="SMR" id="Q5GXE4"/>
<dbReference type="STRING" id="291331.XOO3373"/>
<dbReference type="KEGG" id="xoo:XOO3373"/>
<dbReference type="HOGENOM" id="CLU_050910_0_1_6"/>
<dbReference type="UniPathway" id="UPA00989"/>
<dbReference type="Proteomes" id="UP000006735">
    <property type="component" value="Chromosome"/>
</dbReference>
<dbReference type="GO" id="GO:0043527">
    <property type="term" value="C:tRNA methyltransferase complex"/>
    <property type="evidence" value="ECO:0007669"/>
    <property type="project" value="TreeGrafter"/>
</dbReference>
<dbReference type="GO" id="GO:0008176">
    <property type="term" value="F:tRNA (guanine(46)-N7)-methyltransferase activity"/>
    <property type="evidence" value="ECO:0007669"/>
    <property type="project" value="UniProtKB-UniRule"/>
</dbReference>
<dbReference type="CDD" id="cd02440">
    <property type="entry name" value="AdoMet_MTases"/>
    <property type="match status" value="1"/>
</dbReference>
<dbReference type="FunFam" id="3.40.50.150:FF:000035">
    <property type="entry name" value="tRNA (guanine-N(7)-)-methyltransferase"/>
    <property type="match status" value="1"/>
</dbReference>
<dbReference type="Gene3D" id="3.40.50.150">
    <property type="entry name" value="Vaccinia Virus protein VP39"/>
    <property type="match status" value="1"/>
</dbReference>
<dbReference type="HAMAP" id="MF_01057">
    <property type="entry name" value="tRNA_methyltr_TrmB"/>
    <property type="match status" value="1"/>
</dbReference>
<dbReference type="InterPro" id="IPR029063">
    <property type="entry name" value="SAM-dependent_MTases_sf"/>
</dbReference>
<dbReference type="InterPro" id="IPR003358">
    <property type="entry name" value="tRNA_(Gua-N-7)_MeTrfase_Trmb"/>
</dbReference>
<dbReference type="InterPro" id="IPR055361">
    <property type="entry name" value="tRNA_methyltr_TrmB_bact"/>
</dbReference>
<dbReference type="NCBIfam" id="TIGR00091">
    <property type="entry name" value="tRNA (guanosine(46)-N7)-methyltransferase TrmB"/>
    <property type="match status" value="1"/>
</dbReference>
<dbReference type="PANTHER" id="PTHR23417">
    <property type="entry name" value="3-DEOXY-D-MANNO-OCTULOSONIC-ACID TRANSFERASE/TRNA GUANINE-N 7 - -METHYLTRANSFERASE"/>
    <property type="match status" value="1"/>
</dbReference>
<dbReference type="PANTHER" id="PTHR23417:SF14">
    <property type="entry name" value="PENTACOTRIPEPTIDE-REPEAT REGION OF PRORP DOMAIN-CONTAINING PROTEIN"/>
    <property type="match status" value="1"/>
</dbReference>
<dbReference type="Pfam" id="PF02390">
    <property type="entry name" value="Methyltransf_4"/>
    <property type="match status" value="1"/>
</dbReference>
<dbReference type="SUPFAM" id="SSF53335">
    <property type="entry name" value="S-adenosyl-L-methionine-dependent methyltransferases"/>
    <property type="match status" value="1"/>
</dbReference>
<dbReference type="PROSITE" id="PS51625">
    <property type="entry name" value="SAM_MT_TRMB"/>
    <property type="match status" value="1"/>
</dbReference>
<sequence>MTDPFTSDGAKMPPKPFTIEAGRRQVRSFVLRQGRFTSAQQRAFDELWPRFGLEYLGTPRDLAATFGRDTHKVLEIGFGNGAALRFAAQQDPSRDYIGIEVHAPGVGRLLNALEEDGSTHVRLYHHDAVEVLEHEIADGALDEVRIYFPDPWHKKRHNKRRLIQPAFAQLLVRKLRDGGRLHAATDWADYAEQMWDVLDATPGLVNRAGPRGHVERPAWRPQTHFETRGQKLGHGVWDLVYDRDPGVGSGDA</sequence>
<gene>
    <name evidence="2" type="primary">trmB</name>
    <name type="ordered locus">XOO3373</name>
</gene>
<accession>Q5GXE4</accession>